<reference key="1">
    <citation type="journal article" date="2003" name="J. Biol. Chem.">
        <title>Macroautophagy is required for multicellular development of the social amoeba Dictyostelium discoideum.</title>
        <authorList>
            <person name="Otto G.P."/>
            <person name="Wu M.Y."/>
            <person name="Kazgan N."/>
            <person name="Anderson O.R."/>
            <person name="Kessin R.H."/>
        </authorList>
    </citation>
    <scope>NUCLEOTIDE SEQUENCE [GENOMIC DNA]</scope>
    <scope>FUNCTION</scope>
    <source>
        <strain>AX3 / DH1</strain>
    </source>
</reference>
<reference key="2">
    <citation type="journal article" date="2002" name="Nature">
        <title>Sequence and analysis of chromosome 2 of Dictyostelium discoideum.</title>
        <authorList>
            <person name="Gloeckner G."/>
            <person name="Eichinger L."/>
            <person name="Szafranski K."/>
            <person name="Pachebat J.A."/>
            <person name="Bankier A.T."/>
            <person name="Dear P.H."/>
            <person name="Lehmann R."/>
            <person name="Baumgart C."/>
            <person name="Parra G."/>
            <person name="Abril J.F."/>
            <person name="Guigo R."/>
            <person name="Kumpf K."/>
            <person name="Tunggal B."/>
            <person name="Cox E.C."/>
            <person name="Quail M.A."/>
            <person name="Platzer M."/>
            <person name="Rosenthal A."/>
            <person name="Noegel A.A."/>
        </authorList>
    </citation>
    <scope>NUCLEOTIDE SEQUENCE [LARGE SCALE GENOMIC DNA]</scope>
    <source>
        <strain>AX4</strain>
    </source>
</reference>
<reference key="3">
    <citation type="journal article" date="2005" name="Nature">
        <title>The genome of the social amoeba Dictyostelium discoideum.</title>
        <authorList>
            <person name="Eichinger L."/>
            <person name="Pachebat J.A."/>
            <person name="Gloeckner G."/>
            <person name="Rajandream M.A."/>
            <person name="Sucgang R."/>
            <person name="Berriman M."/>
            <person name="Song J."/>
            <person name="Olsen R."/>
            <person name="Szafranski K."/>
            <person name="Xu Q."/>
            <person name="Tunggal B."/>
            <person name="Kummerfeld S."/>
            <person name="Madera M."/>
            <person name="Konfortov B.A."/>
            <person name="Rivero F."/>
            <person name="Bankier A.T."/>
            <person name="Lehmann R."/>
            <person name="Hamlin N."/>
            <person name="Davies R."/>
            <person name="Gaudet P."/>
            <person name="Fey P."/>
            <person name="Pilcher K."/>
            <person name="Chen G."/>
            <person name="Saunders D."/>
            <person name="Sodergren E.J."/>
            <person name="Davis P."/>
            <person name="Kerhornou A."/>
            <person name="Nie X."/>
            <person name="Hall N."/>
            <person name="Anjard C."/>
            <person name="Hemphill L."/>
            <person name="Bason N."/>
            <person name="Farbrother P."/>
            <person name="Desany B."/>
            <person name="Just E."/>
            <person name="Morio T."/>
            <person name="Rost R."/>
            <person name="Churcher C.M."/>
            <person name="Cooper J."/>
            <person name="Haydock S."/>
            <person name="van Driessche N."/>
            <person name="Cronin A."/>
            <person name="Goodhead I."/>
            <person name="Muzny D.M."/>
            <person name="Mourier T."/>
            <person name="Pain A."/>
            <person name="Lu M."/>
            <person name="Harper D."/>
            <person name="Lindsay R."/>
            <person name="Hauser H."/>
            <person name="James K.D."/>
            <person name="Quiles M."/>
            <person name="Madan Babu M."/>
            <person name="Saito T."/>
            <person name="Buchrieser C."/>
            <person name="Wardroper A."/>
            <person name="Felder M."/>
            <person name="Thangavelu M."/>
            <person name="Johnson D."/>
            <person name="Knights A."/>
            <person name="Loulseged H."/>
            <person name="Mungall K.L."/>
            <person name="Oliver K."/>
            <person name="Price C."/>
            <person name="Quail M.A."/>
            <person name="Urushihara H."/>
            <person name="Hernandez J."/>
            <person name="Rabbinowitsch E."/>
            <person name="Steffen D."/>
            <person name="Sanders M."/>
            <person name="Ma J."/>
            <person name="Kohara Y."/>
            <person name="Sharp S."/>
            <person name="Simmonds M.N."/>
            <person name="Spiegler S."/>
            <person name="Tivey A."/>
            <person name="Sugano S."/>
            <person name="White B."/>
            <person name="Walker D."/>
            <person name="Woodward J.R."/>
            <person name="Winckler T."/>
            <person name="Tanaka Y."/>
            <person name="Shaulsky G."/>
            <person name="Schleicher M."/>
            <person name="Weinstock G.M."/>
            <person name="Rosenthal A."/>
            <person name="Cox E.C."/>
            <person name="Chisholm R.L."/>
            <person name="Gibbs R.A."/>
            <person name="Loomis W.F."/>
            <person name="Platzer M."/>
            <person name="Kay R.R."/>
            <person name="Williams J.G."/>
            <person name="Dear P.H."/>
            <person name="Noegel A.A."/>
            <person name="Barrell B.G."/>
            <person name="Kuspa A."/>
        </authorList>
    </citation>
    <scope>NUCLEOTIDE SEQUENCE [LARGE SCALE GENOMIC DNA]</scope>
    <source>
        <strain>AX4</strain>
    </source>
</reference>
<reference key="4">
    <citation type="journal article" date="2009" name="Proc. Natl. Acad. Sci. U.S.A.">
        <title>Autophagy genes protect against Salmonella typhimurium infection and mediate insulin signaling-regulated pathogen resistance.</title>
        <authorList>
            <person name="Jia K."/>
            <person name="Thomas C."/>
            <person name="Akbar M."/>
            <person name="Sun Q."/>
            <person name="Adams-Huet B."/>
            <person name="Gilpin C."/>
            <person name="Levine B."/>
        </authorList>
    </citation>
    <scope>FUNCTION</scope>
    <scope>DISRUPTION PHENOTYPE</scope>
</reference>
<protein>
    <recommendedName>
        <fullName>Ubiquitin-like modifier-activating enzyme atg7</fullName>
    </recommendedName>
    <alternativeName>
        <fullName>ATG12-activating enzyme E1 atg7</fullName>
    </alternativeName>
    <alternativeName>
        <fullName>Autophagy-related protein 7</fullName>
    </alternativeName>
</protein>
<dbReference type="EMBL" id="AY191014">
    <property type="protein sequence ID" value="AAO39077.1"/>
    <property type="molecule type" value="Genomic_DNA"/>
</dbReference>
<dbReference type="EMBL" id="AAFI02000006">
    <property type="protein sequence ID" value="EAL71880.1"/>
    <property type="molecule type" value="Genomic_DNA"/>
</dbReference>
<dbReference type="RefSeq" id="XP_645809.1">
    <property type="nucleotide sequence ID" value="XM_640717.1"/>
</dbReference>
<dbReference type="SMR" id="Q86CR9"/>
<dbReference type="FunCoup" id="Q86CR9">
    <property type="interactions" value="605"/>
</dbReference>
<dbReference type="STRING" id="44689.Q86CR9"/>
<dbReference type="PaxDb" id="44689-DDB0214819"/>
<dbReference type="EnsemblProtists" id="EAL71880">
    <property type="protein sequence ID" value="EAL71880"/>
    <property type="gene ID" value="DDB_G0271096"/>
</dbReference>
<dbReference type="GeneID" id="8617799"/>
<dbReference type="KEGG" id="ddi:DDB_G0271096"/>
<dbReference type="dictyBase" id="DDB_G0271096">
    <property type="gene designation" value="atg7"/>
</dbReference>
<dbReference type="VEuPathDB" id="AmoebaDB:DDB_G0271096"/>
<dbReference type="eggNOG" id="KOG2337">
    <property type="taxonomic scope" value="Eukaryota"/>
</dbReference>
<dbReference type="HOGENOM" id="CLU_012998_2_1_1"/>
<dbReference type="InParanoid" id="Q86CR9"/>
<dbReference type="OMA" id="RQIWDAI"/>
<dbReference type="PhylomeDB" id="Q86CR9"/>
<dbReference type="Reactome" id="R-DDI-1632852">
    <property type="pathway name" value="Macroautophagy"/>
</dbReference>
<dbReference type="Reactome" id="R-DDI-6798695">
    <property type="pathway name" value="Neutrophil degranulation"/>
</dbReference>
<dbReference type="Reactome" id="R-DDI-983168">
    <property type="pathway name" value="Antigen processing: Ubiquitination &amp; Proteasome degradation"/>
</dbReference>
<dbReference type="PRO" id="PR:Q86CR9"/>
<dbReference type="Proteomes" id="UP000002195">
    <property type="component" value="Chromosome 2"/>
</dbReference>
<dbReference type="GO" id="GO:0005737">
    <property type="term" value="C:cytoplasm"/>
    <property type="evidence" value="ECO:0000318"/>
    <property type="project" value="GO_Central"/>
</dbReference>
<dbReference type="GO" id="GO:0005829">
    <property type="term" value="C:cytosol"/>
    <property type="evidence" value="ECO:0000314"/>
    <property type="project" value="dictyBase"/>
</dbReference>
<dbReference type="GO" id="GO:0000407">
    <property type="term" value="C:phagophore assembly site"/>
    <property type="evidence" value="ECO:0000318"/>
    <property type="project" value="GO_Central"/>
</dbReference>
<dbReference type="GO" id="GO:0019778">
    <property type="term" value="F:Atg12 activating enzyme activity"/>
    <property type="evidence" value="ECO:0000318"/>
    <property type="project" value="GO_Central"/>
</dbReference>
<dbReference type="GO" id="GO:0019779">
    <property type="term" value="F:Atg8 activating enzyme activity"/>
    <property type="evidence" value="ECO:0000318"/>
    <property type="project" value="GO_Central"/>
</dbReference>
<dbReference type="GO" id="GO:0019787">
    <property type="term" value="F:ubiquitin-like protein transferase activity"/>
    <property type="evidence" value="ECO:0000250"/>
    <property type="project" value="dictyBase"/>
</dbReference>
<dbReference type="GO" id="GO:0000045">
    <property type="term" value="P:autophagosome assembly"/>
    <property type="evidence" value="ECO:0000318"/>
    <property type="project" value="GO_Central"/>
</dbReference>
<dbReference type="GO" id="GO:0006995">
    <property type="term" value="P:cellular response to nitrogen starvation"/>
    <property type="evidence" value="ECO:0000315"/>
    <property type="project" value="dictyBase"/>
</dbReference>
<dbReference type="GO" id="GO:0042742">
    <property type="term" value="P:defense response to bacterium"/>
    <property type="evidence" value="ECO:0000314"/>
    <property type="project" value="dictyBase"/>
</dbReference>
<dbReference type="GO" id="GO:0016236">
    <property type="term" value="P:macroautophagy"/>
    <property type="evidence" value="ECO:0000315"/>
    <property type="project" value="dictyBase"/>
</dbReference>
<dbReference type="GO" id="GO:0000423">
    <property type="term" value="P:mitophagy"/>
    <property type="evidence" value="ECO:0000318"/>
    <property type="project" value="GO_Central"/>
</dbReference>
<dbReference type="GO" id="GO:0034727">
    <property type="term" value="P:piecemeal microautophagy of the nucleus"/>
    <property type="evidence" value="ECO:0000318"/>
    <property type="project" value="GO_Central"/>
</dbReference>
<dbReference type="GO" id="GO:0032446">
    <property type="term" value="P:protein modification by small protein conjugation"/>
    <property type="evidence" value="ECO:0000318"/>
    <property type="project" value="GO_Central"/>
</dbReference>
<dbReference type="GO" id="GO:0015031">
    <property type="term" value="P:protein transport"/>
    <property type="evidence" value="ECO:0007669"/>
    <property type="project" value="UniProtKB-KW"/>
</dbReference>
<dbReference type="GO" id="GO:0010468">
    <property type="term" value="P:regulation of gene expression"/>
    <property type="evidence" value="ECO:0000315"/>
    <property type="project" value="dictyBase"/>
</dbReference>
<dbReference type="GO" id="GO:0030587">
    <property type="term" value="P:sorocarp development"/>
    <property type="evidence" value="ECO:0000315"/>
    <property type="project" value="dictyBase"/>
</dbReference>
<dbReference type="GO" id="GO:0031288">
    <property type="term" value="P:sorocarp morphogenesis"/>
    <property type="evidence" value="ECO:0000315"/>
    <property type="project" value="dictyBase"/>
</dbReference>
<dbReference type="GO" id="GO:0044671">
    <property type="term" value="P:sorocarp spore cell differentiation"/>
    <property type="evidence" value="ECO:0000315"/>
    <property type="project" value="dictyBase"/>
</dbReference>
<dbReference type="GO" id="GO:0030435">
    <property type="term" value="P:sporulation resulting in formation of a cellular spore"/>
    <property type="evidence" value="ECO:0000315"/>
    <property type="project" value="dictyBase"/>
</dbReference>
<dbReference type="CDD" id="cd01486">
    <property type="entry name" value="Apg7"/>
    <property type="match status" value="1"/>
</dbReference>
<dbReference type="FunFam" id="3.40.50.720:FF:000243">
    <property type="entry name" value="Ubiquitin-like modifier-activating enzyme ATG7"/>
    <property type="match status" value="1"/>
</dbReference>
<dbReference type="FunFam" id="3.40.140.70:FF:000004">
    <property type="entry name" value="Ubiquitin-like modifier-activating enzyme atg7"/>
    <property type="match status" value="1"/>
</dbReference>
<dbReference type="Gene3D" id="3.40.50.720">
    <property type="entry name" value="NAD(P)-binding Rossmann-like Domain"/>
    <property type="match status" value="1"/>
</dbReference>
<dbReference type="Gene3D" id="3.40.140.100">
    <property type="entry name" value="Ubiquitin-like modifier-activating enzyme ATG7 C-terminal domain"/>
    <property type="match status" value="1"/>
</dbReference>
<dbReference type="Gene3D" id="3.40.140.70">
    <property type="entry name" value="Ubiquitin-like modifier-activating enzyme ATG7 N-terminal domain"/>
    <property type="match status" value="1"/>
</dbReference>
<dbReference type="InterPro" id="IPR006285">
    <property type="entry name" value="Atg7"/>
</dbReference>
<dbReference type="InterPro" id="IPR032197">
    <property type="entry name" value="Atg7_N"/>
</dbReference>
<dbReference type="InterPro" id="IPR042522">
    <property type="entry name" value="Atg7_N_1"/>
</dbReference>
<dbReference type="InterPro" id="IPR042523">
    <property type="entry name" value="Atg7_N_2"/>
</dbReference>
<dbReference type="InterPro" id="IPR045886">
    <property type="entry name" value="ThiF/MoeB/HesA"/>
</dbReference>
<dbReference type="InterPro" id="IPR000594">
    <property type="entry name" value="ThiF_NAD_FAD-bd"/>
</dbReference>
<dbReference type="InterPro" id="IPR035985">
    <property type="entry name" value="Ubiquitin-activating_enz"/>
</dbReference>
<dbReference type="NCBIfam" id="TIGR01381">
    <property type="entry name" value="E1_like_apg7"/>
    <property type="match status" value="1"/>
</dbReference>
<dbReference type="PANTHER" id="PTHR10953">
    <property type="entry name" value="UBIQUITIN-ACTIVATING ENZYME E1"/>
    <property type="match status" value="1"/>
</dbReference>
<dbReference type="PANTHER" id="PTHR10953:SF3">
    <property type="entry name" value="UBIQUITIN-LIKE MODIFIER-ACTIVATING ENZYME ATG7"/>
    <property type="match status" value="1"/>
</dbReference>
<dbReference type="Pfam" id="PF16420">
    <property type="entry name" value="ATG7_N"/>
    <property type="match status" value="1"/>
</dbReference>
<dbReference type="Pfam" id="PF00899">
    <property type="entry name" value="ThiF"/>
    <property type="match status" value="1"/>
</dbReference>
<dbReference type="SUPFAM" id="SSF69572">
    <property type="entry name" value="Activating enzymes of the ubiquitin-like proteins"/>
    <property type="match status" value="1"/>
</dbReference>
<gene>
    <name type="primary">atg7</name>
    <name type="synonym">apg7</name>
    <name type="ORF">DDB_G0271096</name>
</gene>
<evidence type="ECO:0000250" key="1"/>
<evidence type="ECO:0000250" key="2">
    <source>
        <dbReference type="UniProtKB" id="P38862"/>
    </source>
</evidence>
<evidence type="ECO:0000256" key="3">
    <source>
        <dbReference type="SAM" id="MobiDB-lite"/>
    </source>
</evidence>
<evidence type="ECO:0000269" key="4">
    <source>
    </source>
</evidence>
<evidence type="ECO:0000269" key="5">
    <source>
    </source>
</evidence>
<evidence type="ECO:0000305" key="6"/>
<sequence length="707" mass="79859">MTNTLQFKEFSSFVNISFWHELSNKKLDELKLSEESIPLNGHYTFSPSQQLDPFLCLEFNAFLRNNVTNSTENQYVLPPRSYLSHGTLYNYNTVDDFKQSPKIKLFNDASKRIWNDINNGNIDKDTSLLNRFILLTYADIKNHQFYYMFGIPALLPSQPIQQFTEKPESINIESLKSFSNQILPQYFCLKQQQQESSTTTTTSFELIGSIEEKGNQYLNECLENDLIPLVGFCDPCSLPLNPGWPLRNFLIYLSIKYPMLKKIKVLCYRGNGSTSNSILLSLELPSMGEQLIKKQQEEDAGEWSGKSVGWEKDSNGKIAPRFVSLASTMDPLKLAEQSVDLNLKLMRWRVMPSLELEKIKTTSCLLLGSGTLGCNVARSLMSWGVRNITFVDSSKVSYSNPVRQSLFTFADCSPKAKEKSIAAADALKKIFPAINANAHVFSIPMPGHSVPQSEYQSIRNTIELLENLIKQHDVIYLLTDSRESRWLPTMLSRAHGKLCINAALGFDSYLVIRHGIKDQCQNELNPSISSKLGYQGSDLGCYFCNDVIAPTDTLKDRTLDQMCTVTRPGLSMMASSIAVELLISTIHHPYGGRAKGETETDVYVQGSTPLGIIPHQLRGFISHYQTLPLFSNPYKHCTACSDYIIDEYNSKGFDFIINVMNDSSCLTKICGIDDLKNTEVNIDWDIDISDDDDDNNNNNNKEKNDDF</sequence>
<accession>Q86CR9</accession>
<accession>Q55BK5</accession>
<keyword id="KW-0072">Autophagy</keyword>
<keyword id="KW-0963">Cytoplasm</keyword>
<keyword id="KW-0653">Protein transport</keyword>
<keyword id="KW-1185">Reference proteome</keyword>
<keyword id="KW-0813">Transport</keyword>
<keyword id="KW-0833">Ubl conjugation pathway</keyword>
<organism>
    <name type="scientific">Dictyostelium discoideum</name>
    <name type="common">Social amoeba</name>
    <dbReference type="NCBI Taxonomy" id="44689"/>
    <lineage>
        <taxon>Eukaryota</taxon>
        <taxon>Amoebozoa</taxon>
        <taxon>Evosea</taxon>
        <taxon>Eumycetozoa</taxon>
        <taxon>Dictyostelia</taxon>
        <taxon>Dictyosteliales</taxon>
        <taxon>Dictyosteliaceae</taxon>
        <taxon>Dictyostelium</taxon>
    </lineage>
</organism>
<proteinExistence type="inferred from homology"/>
<comment type="function">
    <text evidence="2 4 5">E1-like activating enzyme involved in the 2 ubiquitin-like systems required for autophagy (PubMed:12626495). Activates atg12 for its conjugation with atg5 and atg8 for its conjugation with phosphatidylethanolamine. Both systems are needed for the atg8 association to autophagosomes membranes (By similarity). Required for normal survival when exposed to pathogenic bacteria S.typhimurium by promoting autophagic degradation of intracellular S.typhimurium (PubMed:19667176).</text>
</comment>
<comment type="subunit">
    <text evidence="1">Homodimer. Interacts with atg8 through a thioester bond between Cys-563 and the C-terminal 'Gly-120' of atg8 and with ATG12 through a thioester bond between Cys-563 and the C-terminal 'Gly-124' of atg12 (By similarity).</text>
</comment>
<comment type="subcellular location">
    <subcellularLocation>
        <location evidence="1">Cytoplasm</location>
    </subcellularLocation>
    <subcellularLocation>
        <location evidence="1">Preautophagosomal structure</location>
    </subcellularLocation>
</comment>
<comment type="domain">
    <text>The GxGxxG motif is important for the function, possibly through binding with ATP.</text>
</comment>
<comment type="disruption phenotype">
    <text evidence="5">Impaired survival when exposed to pathogenic bacteria S.typhimurium associated with the accumulation of S.typhimuriumin in large vacuoles which fail to undergo autophagy.</text>
</comment>
<comment type="similarity">
    <text evidence="6">Belongs to the ATG7 family.</text>
</comment>
<feature type="chain" id="PRO_0000327586" description="Ubiquitin-like modifier-activating enzyme atg7">
    <location>
        <begin position="1"/>
        <end position="707"/>
    </location>
</feature>
<feature type="region of interest" description="Disordered" evidence="3">
    <location>
        <begin position="686"/>
        <end position="707"/>
    </location>
</feature>
<feature type="short sequence motif" description="GXGXXG motif" evidence="1">
    <location>
        <begin position="368"/>
        <end position="373"/>
    </location>
</feature>
<feature type="compositionally biased region" description="Acidic residues" evidence="3">
    <location>
        <begin position="686"/>
        <end position="695"/>
    </location>
</feature>
<feature type="active site" description="Glycyl thioester intermediate" evidence="1">
    <location>
        <position position="563"/>
    </location>
</feature>
<name>ATG7_DICDI</name>